<name>MLAC_ECOLI</name>
<gene>
    <name evidence="4" type="primary">mlaC</name>
    <name type="synonym">yrbC</name>
    <name type="ordered locus">b3192</name>
    <name type="ordered locus">JW3159</name>
</gene>
<protein>
    <recommendedName>
        <fullName evidence="5">Intermembrane phospholipid transport system binding protein MlaC</fullName>
    </recommendedName>
</protein>
<keyword id="KW-0002">3D-structure</keyword>
<keyword id="KW-0574">Periplasm</keyword>
<keyword id="KW-1185">Reference proteome</keyword>
<keyword id="KW-0732">Signal</keyword>
<sequence length="211" mass="23963">MFKRLMMVALLVIAPLSAATAADQTNPYKLMDEAAQKTFDRLKNEQPQIRANPDYLRTIVDQELLPYVQVKYAGALVLGQYYKSATPAQREAYFAAFREYLKQAYGQALAMYHGQTYQIAPEQPLGDKTIVPIRVTIIDPNGRPPVRLDFQWRKNSQTGNWQAYDMIAEGVSMITTKQNEWGTLLRTKGIDGLTAQLKSISQQKITLEEKK</sequence>
<organism>
    <name type="scientific">Escherichia coli (strain K12)</name>
    <dbReference type="NCBI Taxonomy" id="83333"/>
    <lineage>
        <taxon>Bacteria</taxon>
        <taxon>Pseudomonadati</taxon>
        <taxon>Pseudomonadota</taxon>
        <taxon>Gammaproteobacteria</taxon>
        <taxon>Enterobacterales</taxon>
        <taxon>Enterobacteriaceae</taxon>
        <taxon>Escherichia</taxon>
    </lineage>
</organism>
<proteinExistence type="evidence at protein level"/>
<feature type="signal peptide" evidence="1">
    <location>
        <begin position="1"/>
        <end position="21"/>
    </location>
</feature>
<feature type="chain" id="PRO_0000013916" description="Intermembrane phospholipid transport system binding protein MlaC">
    <location>
        <begin position="22"/>
        <end position="211"/>
    </location>
</feature>
<feature type="helix" evidence="8">
    <location>
        <begin position="27"/>
        <end position="44"/>
    </location>
</feature>
<feature type="helix" evidence="8">
    <location>
        <begin position="46"/>
        <end position="51"/>
    </location>
</feature>
<feature type="helix" evidence="8">
    <location>
        <begin position="55"/>
        <end position="63"/>
    </location>
</feature>
<feature type="helix" evidence="8">
    <location>
        <begin position="65"/>
        <end position="67"/>
    </location>
</feature>
<feature type="helix" evidence="8">
    <location>
        <begin position="70"/>
        <end position="78"/>
    </location>
</feature>
<feature type="helix" evidence="8">
    <location>
        <begin position="80"/>
        <end position="83"/>
    </location>
</feature>
<feature type="helix" evidence="8">
    <location>
        <begin position="87"/>
        <end position="109"/>
    </location>
</feature>
<feature type="strand" evidence="8">
    <location>
        <begin position="116"/>
        <end position="119"/>
    </location>
</feature>
<feature type="strand" evidence="8">
    <location>
        <begin position="129"/>
        <end position="138"/>
    </location>
</feature>
<feature type="strand" evidence="8">
    <location>
        <begin position="146"/>
        <end position="154"/>
    </location>
</feature>
<feature type="turn" evidence="8">
    <location>
        <begin position="156"/>
        <end position="158"/>
    </location>
</feature>
<feature type="strand" evidence="8">
    <location>
        <begin position="161"/>
        <end position="168"/>
    </location>
</feature>
<feature type="helix" evidence="8">
    <location>
        <begin position="173"/>
        <end position="180"/>
    </location>
</feature>
<feature type="helix" evidence="8">
    <location>
        <begin position="182"/>
        <end position="201"/>
    </location>
</feature>
<accession>P0ADV7</accession>
<accession>P45390</accession>
<accession>Q2M920</accession>
<reference key="1">
    <citation type="journal article" date="1997" name="Science">
        <title>The complete genome sequence of Escherichia coli K-12.</title>
        <authorList>
            <person name="Blattner F.R."/>
            <person name="Plunkett G. III"/>
            <person name="Bloch C.A."/>
            <person name="Perna N.T."/>
            <person name="Burland V."/>
            <person name="Riley M."/>
            <person name="Collado-Vides J."/>
            <person name="Glasner J.D."/>
            <person name="Rode C.K."/>
            <person name="Mayhew G.F."/>
            <person name="Gregor J."/>
            <person name="Davis N.W."/>
            <person name="Kirkpatrick H.A."/>
            <person name="Goeden M.A."/>
            <person name="Rose D.J."/>
            <person name="Mau B."/>
            <person name="Shao Y."/>
        </authorList>
    </citation>
    <scope>NUCLEOTIDE SEQUENCE [LARGE SCALE GENOMIC DNA]</scope>
    <source>
        <strain>K12 / MG1655 / ATCC 47076</strain>
    </source>
</reference>
<reference key="2">
    <citation type="journal article" date="2006" name="Mol. Syst. Biol.">
        <title>Highly accurate genome sequences of Escherichia coli K-12 strains MG1655 and W3110.</title>
        <authorList>
            <person name="Hayashi K."/>
            <person name="Morooka N."/>
            <person name="Yamamoto Y."/>
            <person name="Fujita K."/>
            <person name="Isono K."/>
            <person name="Choi S."/>
            <person name="Ohtsubo E."/>
            <person name="Baba T."/>
            <person name="Wanner B.L."/>
            <person name="Mori H."/>
            <person name="Horiuchi T."/>
        </authorList>
    </citation>
    <scope>NUCLEOTIDE SEQUENCE [LARGE SCALE GENOMIC DNA]</scope>
    <source>
        <strain>K12 / W3110 / ATCC 27325 / DSM 5911</strain>
    </source>
</reference>
<reference key="3">
    <citation type="journal article" date="2009" name="Proc. Natl. Acad. Sci. U.S.A.">
        <title>An ABC transport system that maintains lipid asymmetry in the gram-negative outer membrane.</title>
        <authorList>
            <person name="Malinverni J.C."/>
            <person name="Silhavy T.J."/>
        </authorList>
    </citation>
    <scope>FUNCTION IN PHOSPHOLIPID TRANSPORT</scope>
    <scope>SUBCELLULAR LOCATION</scope>
    <scope>DISRUPTION PHENOTYPE</scope>
    <source>
        <strain>K12 / MC4100 / JA176</strain>
    </source>
</reference>
<reference key="4">
    <citation type="journal article" date="2017" name="Cell">
        <title>Architectures of lipid transport systems for the bacterial outer membrane.</title>
        <authorList>
            <person name="Ekiert D.C."/>
            <person name="Bhabha G."/>
            <person name="Isom G.L."/>
            <person name="Greenan G."/>
            <person name="Ovchinnikov S."/>
            <person name="Henderson I.R."/>
            <person name="Cox J.S."/>
            <person name="Vale R.D."/>
        </authorList>
    </citation>
    <scope>X-RAY CRYSTALLOGRAPHY (1.5 ANGSTROMS) OF 21-210</scope>
    <scope>FUNCTION</scope>
    <scope>INTERACTION WITH MLAFEDB AND MLAA-OMPF</scope>
    <source>
        <strain>K12</strain>
    </source>
</reference>
<comment type="function">
    <text evidence="2 7">Involved in a phospholipid transport pathway that maintains lipid asymmetry in the outer membrane by retrograde trafficking of phospholipids from the outer membrane to the inner membrane. May transfer phospholipid across the periplasmic space and deliver it to the MlaFEDB complex at the inner membrane.</text>
</comment>
<comment type="subunit">
    <text evidence="3">Interacts with the MlaA-OmpF outer membrane complex and with the inner membrane ABC transporter complex MlaFEDB, via direct interaction with MlaD.</text>
</comment>
<comment type="subcellular location">
    <subcellularLocation>
        <location evidence="6">Periplasm</location>
    </subcellularLocation>
</comment>
<comment type="disruption phenotype">
    <text evidence="2">Mutation leads to accumulation of phospholipid in the outer leaflet of the outer membrane and increased outer membrane permeability. It confers sensitivity to SDS-EDTA.</text>
</comment>
<comment type="similarity">
    <text evidence="5">Belongs to the MlaC/ttg2D family.</text>
</comment>
<dbReference type="EMBL" id="U18997">
    <property type="protein sequence ID" value="AAA57993.1"/>
    <property type="molecule type" value="Genomic_DNA"/>
</dbReference>
<dbReference type="EMBL" id="U00096">
    <property type="protein sequence ID" value="AAC76224.1"/>
    <property type="molecule type" value="Genomic_DNA"/>
</dbReference>
<dbReference type="EMBL" id="AP009048">
    <property type="protein sequence ID" value="BAE77236.1"/>
    <property type="molecule type" value="Genomic_DNA"/>
</dbReference>
<dbReference type="PIR" id="B65110">
    <property type="entry name" value="B65110"/>
</dbReference>
<dbReference type="RefSeq" id="NP_417659.1">
    <property type="nucleotide sequence ID" value="NC_000913.3"/>
</dbReference>
<dbReference type="RefSeq" id="WP_000476487.1">
    <property type="nucleotide sequence ID" value="NZ_STEB01000012.1"/>
</dbReference>
<dbReference type="PDB" id="5UWA">
    <property type="method" value="X-ray"/>
    <property type="resolution" value="1.50 A"/>
    <property type="chains" value="A/B=21-210"/>
</dbReference>
<dbReference type="PDB" id="6GKI">
    <property type="method" value="X-ray"/>
    <property type="resolution" value="2.23 A"/>
    <property type="chains" value="A/B=22-211"/>
</dbReference>
<dbReference type="PDB" id="8I8X">
    <property type="method" value="EM"/>
    <property type="resolution" value="3.25 A"/>
    <property type="chains" value="F=21-211"/>
</dbReference>
<dbReference type="PDB" id="8OJ4">
    <property type="method" value="EM"/>
    <property type="resolution" value="4.35 A"/>
    <property type="chains" value="H=1-211"/>
</dbReference>
<dbReference type="PDB" id="8OJG">
    <property type="method" value="EM"/>
    <property type="resolution" value="4.38 A"/>
    <property type="chains" value="G/H=1-211"/>
</dbReference>
<dbReference type="PDBsum" id="5UWA"/>
<dbReference type="PDBsum" id="6GKI"/>
<dbReference type="PDBsum" id="8I8X"/>
<dbReference type="PDBsum" id="8OJ4"/>
<dbReference type="PDBsum" id="8OJG"/>
<dbReference type="EMDB" id="EMD-16904"/>
<dbReference type="EMDB" id="EMD-16913"/>
<dbReference type="EMDB" id="EMD-35253"/>
<dbReference type="SMR" id="P0ADV7"/>
<dbReference type="BioGRID" id="4262983">
    <property type="interactions" value="25"/>
</dbReference>
<dbReference type="FunCoup" id="P0ADV7">
    <property type="interactions" value="313"/>
</dbReference>
<dbReference type="IntAct" id="P0ADV7">
    <property type="interactions" value="5"/>
</dbReference>
<dbReference type="STRING" id="511145.b3192"/>
<dbReference type="TCDB" id="3.A.1.27.3">
    <property type="family name" value="the atp-binding cassette (abc) superfamily"/>
</dbReference>
<dbReference type="jPOST" id="P0ADV7"/>
<dbReference type="PaxDb" id="511145-b3192"/>
<dbReference type="EnsemblBacteria" id="AAC76224">
    <property type="protein sequence ID" value="AAC76224"/>
    <property type="gene ID" value="b3192"/>
</dbReference>
<dbReference type="GeneID" id="75206048"/>
<dbReference type="GeneID" id="947710"/>
<dbReference type="KEGG" id="ecj:JW3159"/>
<dbReference type="KEGG" id="eco:b3192"/>
<dbReference type="KEGG" id="ecoc:C3026_17375"/>
<dbReference type="PATRIC" id="fig|1411691.4.peg.3539"/>
<dbReference type="EchoBASE" id="EB2650"/>
<dbReference type="eggNOG" id="COG2854">
    <property type="taxonomic scope" value="Bacteria"/>
</dbReference>
<dbReference type="HOGENOM" id="CLU_094502_3_0_6"/>
<dbReference type="InParanoid" id="P0ADV7"/>
<dbReference type="OMA" id="QSEWNGK"/>
<dbReference type="OrthoDB" id="9787053at2"/>
<dbReference type="PhylomeDB" id="P0ADV7"/>
<dbReference type="BioCyc" id="EcoCyc:G7659-MONOMER"/>
<dbReference type="PRO" id="PR:P0ADV7"/>
<dbReference type="Proteomes" id="UP000000625">
    <property type="component" value="Chromosome"/>
</dbReference>
<dbReference type="GO" id="GO:0030288">
    <property type="term" value="C:outer membrane-bounded periplasmic space"/>
    <property type="evidence" value="ECO:0000314"/>
    <property type="project" value="EcoCyc"/>
</dbReference>
<dbReference type="GO" id="GO:0120010">
    <property type="term" value="P:intermembrane phospholipid transfer"/>
    <property type="evidence" value="ECO:0000314"/>
    <property type="project" value="EcoCyc"/>
</dbReference>
<dbReference type="GO" id="GO:0015914">
    <property type="term" value="P:phospholipid transport"/>
    <property type="evidence" value="ECO:0000315"/>
    <property type="project" value="EcoCyc"/>
</dbReference>
<dbReference type="FunFam" id="3.10.450.710:FF:000001">
    <property type="entry name" value="ABC transporter substrate-binding protein MlaC"/>
    <property type="match status" value="1"/>
</dbReference>
<dbReference type="Gene3D" id="3.10.450.710">
    <property type="entry name" value="Tgt2/MlaC"/>
    <property type="match status" value="1"/>
</dbReference>
<dbReference type="InterPro" id="IPR008869">
    <property type="entry name" value="MlaC/ttg2D"/>
</dbReference>
<dbReference type="InterPro" id="IPR042245">
    <property type="entry name" value="Tgt2/MlaC_sf"/>
</dbReference>
<dbReference type="NCBIfam" id="NF011697">
    <property type="entry name" value="PRK15117.1"/>
    <property type="match status" value="1"/>
</dbReference>
<dbReference type="PANTHER" id="PTHR36573">
    <property type="entry name" value="INTERMEMBRANE PHOSPHOLIPID TRANSPORT SYSTEM BINDING PROTEIN MLAC"/>
    <property type="match status" value="1"/>
</dbReference>
<dbReference type="PANTHER" id="PTHR36573:SF1">
    <property type="entry name" value="INTERMEMBRANE PHOSPHOLIPID TRANSPORT SYSTEM BINDING PROTEIN MLAC"/>
    <property type="match status" value="1"/>
</dbReference>
<dbReference type="Pfam" id="PF05494">
    <property type="entry name" value="MlaC"/>
    <property type="match status" value="1"/>
</dbReference>
<dbReference type="PIRSF" id="PIRSF004649">
    <property type="entry name" value="MlaC"/>
    <property type="match status" value="1"/>
</dbReference>
<evidence type="ECO:0000255" key="1"/>
<evidence type="ECO:0000269" key="2">
    <source>
    </source>
</evidence>
<evidence type="ECO:0000269" key="3">
    <source>
    </source>
</evidence>
<evidence type="ECO:0000303" key="4">
    <source>
    </source>
</evidence>
<evidence type="ECO:0000305" key="5"/>
<evidence type="ECO:0000305" key="6">
    <source>
    </source>
</evidence>
<evidence type="ECO:0000305" key="7">
    <source>
    </source>
</evidence>
<evidence type="ECO:0007829" key="8">
    <source>
        <dbReference type="PDB" id="5UWA"/>
    </source>
</evidence>